<accession>B5ZB47</accession>
<gene>
    <name evidence="1" type="primary">rplP</name>
    <name type="ordered locus">UUR10_0233</name>
</gene>
<proteinExistence type="inferred from homology"/>
<keyword id="KW-0687">Ribonucleoprotein</keyword>
<keyword id="KW-0689">Ribosomal protein</keyword>
<keyword id="KW-0694">RNA-binding</keyword>
<keyword id="KW-0699">rRNA-binding</keyword>
<keyword id="KW-0820">tRNA-binding</keyword>
<protein>
    <recommendedName>
        <fullName evidence="1">Large ribosomal subunit protein uL16</fullName>
    </recommendedName>
    <alternativeName>
        <fullName evidence="2">50S ribosomal protein L16</fullName>
    </alternativeName>
</protein>
<feature type="chain" id="PRO_1000143047" description="Large ribosomal subunit protein uL16">
    <location>
        <begin position="1"/>
        <end position="138"/>
    </location>
</feature>
<organism>
    <name type="scientific">Ureaplasma urealyticum serovar 10 (strain ATCC 33699 / Western)</name>
    <dbReference type="NCBI Taxonomy" id="565575"/>
    <lineage>
        <taxon>Bacteria</taxon>
        <taxon>Bacillati</taxon>
        <taxon>Mycoplasmatota</taxon>
        <taxon>Mycoplasmoidales</taxon>
        <taxon>Mycoplasmoidaceae</taxon>
        <taxon>Ureaplasma</taxon>
    </lineage>
</organism>
<comment type="function">
    <text evidence="1">Binds 23S rRNA and is also seen to make contacts with the A and possibly P site tRNAs.</text>
</comment>
<comment type="subunit">
    <text evidence="1">Part of the 50S ribosomal subunit.</text>
</comment>
<comment type="similarity">
    <text evidence="1">Belongs to the universal ribosomal protein uL16 family.</text>
</comment>
<reference key="1">
    <citation type="submission" date="2008-10" db="EMBL/GenBank/DDBJ databases">
        <title>Genome sequence of Ureaplasma urealyticum serovar 10 ATCC-33699.</title>
        <authorList>
            <person name="Shrivastava S."/>
            <person name="Methe B.A."/>
            <person name="Glass J."/>
            <person name="White K."/>
            <person name="Duffy L.B."/>
        </authorList>
    </citation>
    <scope>NUCLEOTIDE SEQUENCE [LARGE SCALE GENOMIC DNA]</scope>
    <source>
        <strain>ATCC 33699 / Western</strain>
    </source>
</reference>
<dbReference type="EMBL" id="CP001184">
    <property type="protein sequence ID" value="ACI60020.1"/>
    <property type="molecule type" value="Genomic_DNA"/>
</dbReference>
<dbReference type="RefSeq" id="WP_004026134.1">
    <property type="nucleotide sequence ID" value="NC_011374.1"/>
</dbReference>
<dbReference type="SMR" id="B5ZB47"/>
<dbReference type="STRING" id="565575.UUR10_0233"/>
<dbReference type="GeneID" id="93848713"/>
<dbReference type="KEGG" id="uue:UUR10_0233"/>
<dbReference type="eggNOG" id="COG0197">
    <property type="taxonomic scope" value="Bacteria"/>
</dbReference>
<dbReference type="HOGENOM" id="CLU_078858_2_1_14"/>
<dbReference type="OrthoDB" id="9802589at2"/>
<dbReference type="Proteomes" id="UP000002018">
    <property type="component" value="Chromosome"/>
</dbReference>
<dbReference type="GO" id="GO:0022625">
    <property type="term" value="C:cytosolic large ribosomal subunit"/>
    <property type="evidence" value="ECO:0007669"/>
    <property type="project" value="TreeGrafter"/>
</dbReference>
<dbReference type="GO" id="GO:0019843">
    <property type="term" value="F:rRNA binding"/>
    <property type="evidence" value="ECO:0007669"/>
    <property type="project" value="UniProtKB-UniRule"/>
</dbReference>
<dbReference type="GO" id="GO:0003735">
    <property type="term" value="F:structural constituent of ribosome"/>
    <property type="evidence" value="ECO:0007669"/>
    <property type="project" value="InterPro"/>
</dbReference>
<dbReference type="GO" id="GO:0000049">
    <property type="term" value="F:tRNA binding"/>
    <property type="evidence" value="ECO:0007669"/>
    <property type="project" value="UniProtKB-KW"/>
</dbReference>
<dbReference type="GO" id="GO:0006412">
    <property type="term" value="P:translation"/>
    <property type="evidence" value="ECO:0007669"/>
    <property type="project" value="UniProtKB-UniRule"/>
</dbReference>
<dbReference type="CDD" id="cd01433">
    <property type="entry name" value="Ribosomal_L16_L10e"/>
    <property type="match status" value="1"/>
</dbReference>
<dbReference type="FunFam" id="3.90.1170.10:FF:000001">
    <property type="entry name" value="50S ribosomal protein L16"/>
    <property type="match status" value="1"/>
</dbReference>
<dbReference type="Gene3D" id="3.90.1170.10">
    <property type="entry name" value="Ribosomal protein L10e/L16"/>
    <property type="match status" value="1"/>
</dbReference>
<dbReference type="HAMAP" id="MF_01342">
    <property type="entry name" value="Ribosomal_uL16"/>
    <property type="match status" value="1"/>
</dbReference>
<dbReference type="InterPro" id="IPR047873">
    <property type="entry name" value="Ribosomal_uL16"/>
</dbReference>
<dbReference type="InterPro" id="IPR000114">
    <property type="entry name" value="Ribosomal_uL16_bact-type"/>
</dbReference>
<dbReference type="InterPro" id="IPR020798">
    <property type="entry name" value="Ribosomal_uL16_CS"/>
</dbReference>
<dbReference type="InterPro" id="IPR016180">
    <property type="entry name" value="Ribosomal_uL16_dom"/>
</dbReference>
<dbReference type="InterPro" id="IPR036920">
    <property type="entry name" value="Ribosomal_uL16_sf"/>
</dbReference>
<dbReference type="NCBIfam" id="TIGR01164">
    <property type="entry name" value="rplP_bact"/>
    <property type="match status" value="1"/>
</dbReference>
<dbReference type="PANTHER" id="PTHR12220">
    <property type="entry name" value="50S/60S RIBOSOMAL PROTEIN L16"/>
    <property type="match status" value="1"/>
</dbReference>
<dbReference type="PANTHER" id="PTHR12220:SF13">
    <property type="entry name" value="LARGE RIBOSOMAL SUBUNIT PROTEIN UL16M"/>
    <property type="match status" value="1"/>
</dbReference>
<dbReference type="Pfam" id="PF00252">
    <property type="entry name" value="Ribosomal_L16"/>
    <property type="match status" value="1"/>
</dbReference>
<dbReference type="PRINTS" id="PR00060">
    <property type="entry name" value="RIBOSOMALL16"/>
</dbReference>
<dbReference type="SUPFAM" id="SSF54686">
    <property type="entry name" value="Ribosomal protein L16p/L10e"/>
    <property type="match status" value="1"/>
</dbReference>
<dbReference type="PROSITE" id="PS00701">
    <property type="entry name" value="RIBOSOMAL_L16_2"/>
    <property type="match status" value="1"/>
</dbReference>
<name>RL16_UREU1</name>
<evidence type="ECO:0000255" key="1">
    <source>
        <dbReference type="HAMAP-Rule" id="MF_01342"/>
    </source>
</evidence>
<evidence type="ECO:0000305" key="2"/>
<sequence>MLQPKRTKFRKPHKVSYEGKAKGNKQVDFGEFGLMALEGAWIDARQIESARIAISKRLLKTGKMWIRIFPHMSLTKKPLEVRMGSGKGSPEKWVAVVKAGTVMFEIANVSEELMREALRAAGNKLPIKVKIVKKGEAN</sequence>